<name>EFP_COLP3</name>
<feature type="chain" id="PRO_1000010725" description="Elongation factor P">
    <location>
        <begin position="1"/>
        <end position="191"/>
    </location>
</feature>
<feature type="modified residue" description="N6-(3,6-diaminohexanoyl)-5-hydroxylysine" evidence="1">
    <location>
        <position position="34"/>
    </location>
</feature>
<keyword id="KW-0963">Cytoplasm</keyword>
<keyword id="KW-0251">Elongation factor</keyword>
<keyword id="KW-0379">Hydroxylation</keyword>
<keyword id="KW-0648">Protein biosynthesis</keyword>
<dbReference type="EMBL" id="CP000083">
    <property type="protein sequence ID" value="AAZ25886.1"/>
    <property type="molecule type" value="Genomic_DNA"/>
</dbReference>
<dbReference type="RefSeq" id="WP_011041815.1">
    <property type="nucleotide sequence ID" value="NC_003910.7"/>
</dbReference>
<dbReference type="SMR" id="Q487P4"/>
<dbReference type="STRING" id="167879.CPS_0972"/>
<dbReference type="KEGG" id="cps:CPS_0972"/>
<dbReference type="eggNOG" id="COG0231">
    <property type="taxonomic scope" value="Bacteria"/>
</dbReference>
<dbReference type="HOGENOM" id="CLU_074944_0_0_6"/>
<dbReference type="UniPathway" id="UPA00345"/>
<dbReference type="Proteomes" id="UP000000547">
    <property type="component" value="Chromosome"/>
</dbReference>
<dbReference type="GO" id="GO:0005737">
    <property type="term" value="C:cytoplasm"/>
    <property type="evidence" value="ECO:0007669"/>
    <property type="project" value="UniProtKB-SubCell"/>
</dbReference>
<dbReference type="GO" id="GO:0003746">
    <property type="term" value="F:translation elongation factor activity"/>
    <property type="evidence" value="ECO:0007669"/>
    <property type="project" value="UniProtKB-UniRule"/>
</dbReference>
<dbReference type="GO" id="GO:0043043">
    <property type="term" value="P:peptide biosynthetic process"/>
    <property type="evidence" value="ECO:0007669"/>
    <property type="project" value="InterPro"/>
</dbReference>
<dbReference type="CDD" id="cd04470">
    <property type="entry name" value="S1_EF-P_repeat_1"/>
    <property type="match status" value="1"/>
</dbReference>
<dbReference type="CDD" id="cd05794">
    <property type="entry name" value="S1_EF-P_repeat_2"/>
    <property type="match status" value="1"/>
</dbReference>
<dbReference type="FunFam" id="2.30.30.30:FF:000003">
    <property type="entry name" value="Elongation factor P"/>
    <property type="match status" value="1"/>
</dbReference>
<dbReference type="FunFam" id="2.40.50.140:FF:000004">
    <property type="entry name" value="Elongation factor P"/>
    <property type="match status" value="1"/>
</dbReference>
<dbReference type="FunFam" id="2.40.50.140:FF:000009">
    <property type="entry name" value="Elongation factor P"/>
    <property type="match status" value="1"/>
</dbReference>
<dbReference type="Gene3D" id="2.30.30.30">
    <property type="match status" value="1"/>
</dbReference>
<dbReference type="Gene3D" id="2.40.50.140">
    <property type="entry name" value="Nucleic acid-binding proteins"/>
    <property type="match status" value="2"/>
</dbReference>
<dbReference type="HAMAP" id="MF_00141">
    <property type="entry name" value="EF_P"/>
    <property type="match status" value="1"/>
</dbReference>
<dbReference type="InterPro" id="IPR015365">
    <property type="entry name" value="Elong-fact-P_C"/>
</dbReference>
<dbReference type="InterPro" id="IPR012340">
    <property type="entry name" value="NA-bd_OB-fold"/>
</dbReference>
<dbReference type="InterPro" id="IPR014722">
    <property type="entry name" value="Rib_uL2_dom2"/>
</dbReference>
<dbReference type="InterPro" id="IPR020599">
    <property type="entry name" value="Transl_elong_fac_P/YeiP"/>
</dbReference>
<dbReference type="InterPro" id="IPR013185">
    <property type="entry name" value="Transl_elong_KOW-like"/>
</dbReference>
<dbReference type="InterPro" id="IPR001059">
    <property type="entry name" value="Transl_elong_P/YeiP_cen"/>
</dbReference>
<dbReference type="InterPro" id="IPR013852">
    <property type="entry name" value="Transl_elong_P/YeiP_CS"/>
</dbReference>
<dbReference type="InterPro" id="IPR011768">
    <property type="entry name" value="Transl_elongation_fac_P"/>
</dbReference>
<dbReference type="InterPro" id="IPR008991">
    <property type="entry name" value="Translation_prot_SH3-like_sf"/>
</dbReference>
<dbReference type="NCBIfam" id="TIGR00038">
    <property type="entry name" value="efp"/>
    <property type="match status" value="1"/>
</dbReference>
<dbReference type="NCBIfam" id="NF001810">
    <property type="entry name" value="PRK00529.1"/>
    <property type="match status" value="1"/>
</dbReference>
<dbReference type="PANTHER" id="PTHR30053">
    <property type="entry name" value="ELONGATION FACTOR P"/>
    <property type="match status" value="1"/>
</dbReference>
<dbReference type="PANTHER" id="PTHR30053:SF12">
    <property type="entry name" value="ELONGATION FACTOR P (EF-P) FAMILY PROTEIN"/>
    <property type="match status" value="1"/>
</dbReference>
<dbReference type="Pfam" id="PF01132">
    <property type="entry name" value="EFP"/>
    <property type="match status" value="1"/>
</dbReference>
<dbReference type="Pfam" id="PF08207">
    <property type="entry name" value="EFP_N"/>
    <property type="match status" value="1"/>
</dbReference>
<dbReference type="Pfam" id="PF09285">
    <property type="entry name" value="Elong-fact-P_C"/>
    <property type="match status" value="1"/>
</dbReference>
<dbReference type="PIRSF" id="PIRSF005901">
    <property type="entry name" value="EF-P"/>
    <property type="match status" value="1"/>
</dbReference>
<dbReference type="SMART" id="SM01185">
    <property type="entry name" value="EFP"/>
    <property type="match status" value="1"/>
</dbReference>
<dbReference type="SMART" id="SM00841">
    <property type="entry name" value="Elong-fact-P_C"/>
    <property type="match status" value="1"/>
</dbReference>
<dbReference type="SUPFAM" id="SSF50249">
    <property type="entry name" value="Nucleic acid-binding proteins"/>
    <property type="match status" value="2"/>
</dbReference>
<dbReference type="SUPFAM" id="SSF50104">
    <property type="entry name" value="Translation proteins SH3-like domain"/>
    <property type="match status" value="1"/>
</dbReference>
<dbReference type="PROSITE" id="PS01275">
    <property type="entry name" value="EFP"/>
    <property type="match status" value="1"/>
</dbReference>
<evidence type="ECO:0000255" key="1">
    <source>
        <dbReference type="HAMAP-Rule" id="MF_00141"/>
    </source>
</evidence>
<reference key="1">
    <citation type="journal article" date="2005" name="Proc. Natl. Acad. Sci. U.S.A.">
        <title>The psychrophilic lifestyle as revealed by the genome sequence of Colwellia psychrerythraea 34H through genomic and proteomic analyses.</title>
        <authorList>
            <person name="Methe B.A."/>
            <person name="Nelson K.E."/>
            <person name="Deming J.W."/>
            <person name="Momen B."/>
            <person name="Melamud E."/>
            <person name="Zhang X."/>
            <person name="Moult J."/>
            <person name="Madupu R."/>
            <person name="Nelson W.C."/>
            <person name="Dodson R.J."/>
            <person name="Brinkac L.M."/>
            <person name="Daugherty S.C."/>
            <person name="Durkin A.S."/>
            <person name="DeBoy R.T."/>
            <person name="Kolonay J.F."/>
            <person name="Sullivan S.A."/>
            <person name="Zhou L."/>
            <person name="Davidsen T.M."/>
            <person name="Wu M."/>
            <person name="Huston A.L."/>
            <person name="Lewis M."/>
            <person name="Weaver B."/>
            <person name="Weidman J.F."/>
            <person name="Khouri H."/>
            <person name="Utterback T.R."/>
            <person name="Feldblyum T.V."/>
            <person name="Fraser C.M."/>
        </authorList>
    </citation>
    <scope>NUCLEOTIDE SEQUENCE [LARGE SCALE GENOMIC DNA]</scope>
    <source>
        <strain>34H / ATCC BAA-681</strain>
    </source>
</reference>
<proteinExistence type="inferred from homology"/>
<sequence>MANFSTNQFKAGLKIMLDGEPCNILENELVKPGKGQAFSRVKIRKLVSGKVLEKTFKSGETVEGADVMEVELAYLYADGEFWHFMNNETFEQIGAEEKALGETVKWLVEGDICTITLWNGTPITVTAANFVEIDITETDPGLKGDTAGTGGKPATLATGAVVRVPLFVQIGEKVRIDTRSGEYVSRATKAQ</sequence>
<organism>
    <name type="scientific">Colwellia psychrerythraea (strain 34H / ATCC BAA-681)</name>
    <name type="common">Vibrio psychroerythus</name>
    <dbReference type="NCBI Taxonomy" id="167879"/>
    <lineage>
        <taxon>Bacteria</taxon>
        <taxon>Pseudomonadati</taxon>
        <taxon>Pseudomonadota</taxon>
        <taxon>Gammaproteobacteria</taxon>
        <taxon>Alteromonadales</taxon>
        <taxon>Colwelliaceae</taxon>
        <taxon>Colwellia</taxon>
    </lineage>
</organism>
<protein>
    <recommendedName>
        <fullName evidence="1">Elongation factor P</fullName>
        <shortName evidence="1">EF-P</shortName>
    </recommendedName>
</protein>
<accession>Q487P4</accession>
<comment type="function">
    <text evidence="1">Involved in peptide bond synthesis. Alleviates ribosome stalling that occurs when 3 or more consecutive Pro residues or the sequence PPG is present in a protein, possibly by augmenting the peptidyl transferase activity of the ribosome. Modification of Lys-34 is required for alleviation.</text>
</comment>
<comment type="pathway">
    <text evidence="1">Protein biosynthesis; polypeptide chain elongation.</text>
</comment>
<comment type="subcellular location">
    <subcellularLocation>
        <location evidence="1">Cytoplasm</location>
    </subcellularLocation>
</comment>
<comment type="PTM">
    <text evidence="1">May be beta-lysylated on the epsilon-amino group of Lys-34 by the combined action of EpmA and EpmB, and then hydroxylated on the C5 position of the same residue by EpmC (if this protein is present). Lysylation is critical for the stimulatory effect of EF-P on peptide-bond formation. The lysylation moiety may extend toward the peptidyltransferase center and stabilize the terminal 3-CCA end of the tRNA. Hydroxylation of the C5 position on Lys-34 may allow additional potential stabilizing hydrogen-bond interactions with the P-tRNA.</text>
</comment>
<comment type="similarity">
    <text evidence="1">Belongs to the elongation factor P family.</text>
</comment>
<gene>
    <name evidence="1" type="primary">efp</name>
    <name type="ordered locus">CPS_0972</name>
</gene>